<reference key="1">
    <citation type="journal article" date="2002" name="J. Bacteriol.">
        <title>Whole-genome comparison of Mycobacterium tuberculosis clinical and laboratory strains.</title>
        <authorList>
            <person name="Fleischmann R.D."/>
            <person name="Alland D."/>
            <person name="Eisen J.A."/>
            <person name="Carpenter L."/>
            <person name="White O."/>
            <person name="Peterson J.D."/>
            <person name="DeBoy R.T."/>
            <person name="Dodson R.J."/>
            <person name="Gwinn M.L."/>
            <person name="Haft D.H."/>
            <person name="Hickey E.K."/>
            <person name="Kolonay J.F."/>
            <person name="Nelson W.C."/>
            <person name="Umayam L.A."/>
            <person name="Ermolaeva M.D."/>
            <person name="Salzberg S.L."/>
            <person name="Delcher A."/>
            <person name="Utterback T.R."/>
            <person name="Weidman J.F."/>
            <person name="Khouri H.M."/>
            <person name="Gill J."/>
            <person name="Mikula A."/>
            <person name="Bishai W."/>
            <person name="Jacobs W.R. Jr."/>
            <person name="Venter J.C."/>
            <person name="Fraser C.M."/>
        </authorList>
    </citation>
    <scope>NUCLEOTIDE SEQUENCE [LARGE SCALE GENOMIC DNA]</scope>
    <source>
        <strain>CDC 1551 / Oshkosh</strain>
    </source>
</reference>
<evidence type="ECO:0000255" key="1">
    <source>
        <dbReference type="PROSITE-ProRule" id="PRU01251"/>
    </source>
</evidence>
<evidence type="ECO:0000305" key="2"/>
<dbReference type="EMBL" id="AE000516">
    <property type="protein sequence ID" value="AAK47056.1"/>
    <property type="molecule type" value="Genomic_DNA"/>
</dbReference>
<dbReference type="PIR" id="G70967">
    <property type="entry name" value="G70967"/>
</dbReference>
<dbReference type="RefSeq" id="WP_003413845.1">
    <property type="nucleotide sequence ID" value="NZ_KK341227.1"/>
</dbReference>
<dbReference type="SMR" id="P9WPC6"/>
<dbReference type="KEGG" id="mtc:MT2741"/>
<dbReference type="PATRIC" id="fig|83331.31.peg.2952"/>
<dbReference type="HOGENOM" id="CLU_083296_0_0_11"/>
<dbReference type="Proteomes" id="UP000001020">
    <property type="component" value="Chromosome"/>
</dbReference>
<dbReference type="Gene3D" id="1.10.1780.10">
    <property type="entry name" value="Clp, N-terminal domain"/>
    <property type="match status" value="1"/>
</dbReference>
<dbReference type="InterPro" id="IPR036628">
    <property type="entry name" value="Clp_N_dom_sf"/>
</dbReference>
<dbReference type="InterPro" id="IPR004176">
    <property type="entry name" value="Clp_R_dom"/>
</dbReference>
<dbReference type="Pfam" id="PF02861">
    <property type="entry name" value="Clp_N"/>
    <property type="match status" value="2"/>
</dbReference>
<dbReference type="SUPFAM" id="SSF81923">
    <property type="entry name" value="Double Clp-N motif"/>
    <property type="match status" value="1"/>
</dbReference>
<dbReference type="PROSITE" id="PS51903">
    <property type="entry name" value="CLP_R"/>
    <property type="match status" value="1"/>
</dbReference>
<proteinExistence type="inferred from homology"/>
<feature type="chain" id="PRO_0000426975" description="Uncharacterized protein MT2741">
    <location>
        <begin position="1"/>
        <end position="252"/>
    </location>
</feature>
<feature type="domain" description="Clp R" evidence="1">
    <location>
        <begin position="96"/>
        <end position="238"/>
    </location>
</feature>
<feature type="region of interest" description="Repeat 1" evidence="1">
    <location>
        <begin position="99"/>
        <end position="164"/>
    </location>
</feature>
<feature type="region of interest" description="Repeat 2" evidence="1">
    <location>
        <begin position="172"/>
        <end position="238"/>
    </location>
</feature>
<gene>
    <name type="ordered locus">MT2741</name>
</gene>
<organism>
    <name type="scientific">Mycobacterium tuberculosis (strain CDC 1551 / Oshkosh)</name>
    <dbReference type="NCBI Taxonomy" id="83331"/>
    <lineage>
        <taxon>Bacteria</taxon>
        <taxon>Bacillati</taxon>
        <taxon>Actinomycetota</taxon>
        <taxon>Actinomycetes</taxon>
        <taxon>Mycobacteriales</taxon>
        <taxon>Mycobacteriaceae</taxon>
        <taxon>Mycobacterium</taxon>
        <taxon>Mycobacterium tuberculosis complex</taxon>
    </lineage>
</organism>
<comment type="similarity">
    <text evidence="2">Belongs to the ClpA/ClpB family. ClpC subfamily.</text>
</comment>
<sequence length="252" mass="26627">MPEPTPTAYPVRLDELINAIKRVHSDVLDQLSDAVLAAEHLGEIADHLIGHFVDQARRSGASWSDIGKSMGVTKQAAQKRFVPRAEATTLDSNQGFRRFTPRARNAVVAAQNAAHGAASSEITPDHLLLGVLTDPAALATALLQQQEIDIATLRTAVTLPPAVTEPPQPIPFSGPARKVLELTFREALRLGHNYIGTEHLLLALLELEDGDGPLHRSGVDKSRAEADLITTLASLTGANAAGATDAGATDAG</sequence>
<protein>
    <recommendedName>
        <fullName>Uncharacterized protein MT2741</fullName>
    </recommendedName>
</protein>
<accession>P9WPC6</accession>
<accession>L0TAA6</accession>
<accession>P0A524</accession>
<accession>P71964</accession>
<keyword id="KW-1185">Reference proteome</keyword>
<keyword id="KW-0677">Repeat</keyword>
<name>Y2667_MYCTO</name>